<evidence type="ECO:0000250" key="1">
    <source>
        <dbReference type="UniProtKB" id="P21786"/>
    </source>
</evidence>
<evidence type="ECO:0000269" key="2">
    <source>
    </source>
</evidence>
<evidence type="ECO:0000303" key="3">
    <source>
    </source>
</evidence>
<evidence type="ECO:0000305" key="4"/>
<feature type="peptide" id="PRO_0000395619" description="Allatotropin-related peptide" evidence="2">
    <location>
        <begin position="1"/>
        <end position="13"/>
    </location>
</feature>
<feature type="modified residue" description="Phenylalanine amide" evidence="2">
    <location>
        <position position="13"/>
    </location>
</feature>
<dbReference type="GO" id="GO:0005576">
    <property type="term" value="C:extracellular region"/>
    <property type="evidence" value="ECO:0000250"/>
    <property type="project" value="UniProtKB"/>
</dbReference>
<dbReference type="GO" id="GO:0007218">
    <property type="term" value="P:neuropeptide signaling pathway"/>
    <property type="evidence" value="ECO:0007669"/>
    <property type="project" value="UniProtKB-KW"/>
</dbReference>
<keyword id="KW-0027">Amidation</keyword>
<keyword id="KW-0903">Direct protein sequencing</keyword>
<keyword id="KW-0527">Neuropeptide</keyword>
<keyword id="KW-0964">Secreted</keyword>
<accession>P86550</accession>
<name>ALLTR_ACRHI</name>
<proteinExistence type="evidence at protein level"/>
<organism>
    <name type="scientific">Acrosternum hilare</name>
    <name type="common">Green stink bug</name>
    <name type="synonym">Nezara hilaris</name>
    <dbReference type="NCBI Taxonomy" id="244443"/>
    <lineage>
        <taxon>Eukaryota</taxon>
        <taxon>Metazoa</taxon>
        <taxon>Ecdysozoa</taxon>
        <taxon>Arthropoda</taxon>
        <taxon>Hexapoda</taxon>
        <taxon>Insecta</taxon>
        <taxon>Pterygota</taxon>
        <taxon>Neoptera</taxon>
        <taxon>Paraneoptera</taxon>
        <taxon>Hemiptera</taxon>
        <taxon>Heteroptera</taxon>
        <taxon>Panheteroptera</taxon>
        <taxon>Pentatomomorpha</taxon>
        <taxon>Pentatomoidea</taxon>
        <taxon>Pentatomidae</taxon>
        <taxon>Pentatominae</taxon>
        <taxon>Acrosternum</taxon>
    </lineage>
</organism>
<protein>
    <recommendedName>
        <fullName evidence="3">Allatotropin-related peptide</fullName>
        <shortName evidence="3">ATRP</shortName>
    </recommendedName>
</protein>
<sequence>GFKNVALSTARGF</sequence>
<comment type="subcellular location">
    <subcellularLocation>
        <location evidence="1">Secreted</location>
    </subcellularLocation>
</comment>
<comment type="tissue specificity">
    <text evidence="2">Expressed in the posterior region of the abdominal ventral nerve cord and in the fourth abdominal nerves (at protein level).</text>
</comment>
<comment type="mass spectrometry"/>
<reference evidence="4" key="1">
    <citation type="journal article" date="2009" name="Peptides">
        <title>Neuropeptides in Heteroptera: identification of allatotropin-related peptide and tachykinin-related peptides using MALDI-TOF mass spectrometry.</title>
        <authorList>
            <person name="Neupert S."/>
            <person name="Russell W.K."/>
            <person name="Russell D.H."/>
            <person name="Lopez J.D. Jr."/>
            <person name="Predel R."/>
            <person name="Nachman R.J."/>
        </authorList>
    </citation>
    <scope>PROTEIN SEQUENCE</scope>
    <scope>TISSUE SPECIFICITY</scope>
    <scope>MASS SPECTROMETRY</scope>
    <scope>AMIDATION AT PHE-13</scope>
    <source>
        <tissue evidence="2">Ventral nerve cord</tissue>
    </source>
</reference>